<evidence type="ECO:0000250" key="1"/>
<evidence type="ECO:0000255" key="2"/>
<evidence type="ECO:0000305" key="3"/>
<name>DHA2_STAAC</name>
<protein>
    <recommendedName>
        <fullName>Alanine dehydrogenase 2</fullName>
        <ecNumber>1.4.1.1</ecNumber>
    </recommendedName>
</protein>
<comment type="function">
    <text evidence="1">May play a role in cell wall synthesis as L-alanine is an important constituent of the peptidoglycan layer.</text>
</comment>
<comment type="catalytic activity">
    <reaction>
        <text>L-alanine + NAD(+) + H2O = pyruvate + NH4(+) + NADH + H(+)</text>
        <dbReference type="Rhea" id="RHEA:18405"/>
        <dbReference type="ChEBI" id="CHEBI:15361"/>
        <dbReference type="ChEBI" id="CHEBI:15377"/>
        <dbReference type="ChEBI" id="CHEBI:15378"/>
        <dbReference type="ChEBI" id="CHEBI:28938"/>
        <dbReference type="ChEBI" id="CHEBI:57540"/>
        <dbReference type="ChEBI" id="CHEBI:57945"/>
        <dbReference type="ChEBI" id="CHEBI:57972"/>
        <dbReference type="EC" id="1.4.1.1"/>
    </reaction>
</comment>
<comment type="pathway">
    <text>Amino-acid degradation; L-alanine degradation via dehydrogenase pathway; NH(3) and pyruvate from L-alanine: step 1/1.</text>
</comment>
<comment type="similarity">
    <text evidence="3">Belongs to the AlaDH/PNT family.</text>
</comment>
<accession>Q5HF65</accession>
<dbReference type="EC" id="1.4.1.1"/>
<dbReference type="EMBL" id="CP000046">
    <property type="protein sequence ID" value="AAW38287.1"/>
    <property type="molecule type" value="Genomic_DNA"/>
</dbReference>
<dbReference type="SMR" id="Q5HF65"/>
<dbReference type="KEGG" id="sac:SACOL1758"/>
<dbReference type="HOGENOM" id="CLU_003376_3_0_9"/>
<dbReference type="UniPathway" id="UPA00527">
    <property type="reaction ID" value="UER00585"/>
</dbReference>
<dbReference type="Proteomes" id="UP000000530">
    <property type="component" value="Chromosome"/>
</dbReference>
<dbReference type="GO" id="GO:0005886">
    <property type="term" value="C:plasma membrane"/>
    <property type="evidence" value="ECO:0007669"/>
    <property type="project" value="TreeGrafter"/>
</dbReference>
<dbReference type="GO" id="GO:0000286">
    <property type="term" value="F:alanine dehydrogenase activity"/>
    <property type="evidence" value="ECO:0007669"/>
    <property type="project" value="UniProtKB-EC"/>
</dbReference>
<dbReference type="GO" id="GO:0042853">
    <property type="term" value="P:L-alanine catabolic process"/>
    <property type="evidence" value="ECO:0007669"/>
    <property type="project" value="UniProtKB-UniPathway"/>
</dbReference>
<dbReference type="CDD" id="cd05305">
    <property type="entry name" value="L-AlaDH"/>
    <property type="match status" value="1"/>
</dbReference>
<dbReference type="FunFam" id="3.40.50.720:FF:000049">
    <property type="entry name" value="Alanine dehydrogenase"/>
    <property type="match status" value="1"/>
</dbReference>
<dbReference type="Gene3D" id="3.40.50.720">
    <property type="entry name" value="NAD(P)-binding Rossmann-like Domain"/>
    <property type="match status" value="2"/>
</dbReference>
<dbReference type="InterPro" id="IPR008141">
    <property type="entry name" value="Ala_DH"/>
</dbReference>
<dbReference type="InterPro" id="IPR008143">
    <property type="entry name" value="Ala_DH/PNT_CS2"/>
</dbReference>
<dbReference type="InterPro" id="IPR008142">
    <property type="entry name" value="AlaDH/PNT_CS1"/>
</dbReference>
<dbReference type="InterPro" id="IPR007886">
    <property type="entry name" value="AlaDH/PNT_N"/>
</dbReference>
<dbReference type="InterPro" id="IPR007698">
    <property type="entry name" value="AlaDH/PNT_NAD(H)-bd"/>
</dbReference>
<dbReference type="InterPro" id="IPR036291">
    <property type="entry name" value="NAD(P)-bd_dom_sf"/>
</dbReference>
<dbReference type="NCBIfam" id="TIGR00518">
    <property type="entry name" value="alaDH"/>
    <property type="match status" value="1"/>
</dbReference>
<dbReference type="PANTHER" id="PTHR42795">
    <property type="entry name" value="ALANINE DEHYDROGENASE"/>
    <property type="match status" value="1"/>
</dbReference>
<dbReference type="PANTHER" id="PTHR42795:SF1">
    <property type="entry name" value="ALANINE DEHYDROGENASE"/>
    <property type="match status" value="1"/>
</dbReference>
<dbReference type="Pfam" id="PF01262">
    <property type="entry name" value="AlaDh_PNT_C"/>
    <property type="match status" value="1"/>
</dbReference>
<dbReference type="Pfam" id="PF05222">
    <property type="entry name" value="AlaDh_PNT_N"/>
    <property type="match status" value="1"/>
</dbReference>
<dbReference type="PIRSF" id="PIRSF000183">
    <property type="entry name" value="Alanine_dh"/>
    <property type="match status" value="1"/>
</dbReference>
<dbReference type="SMART" id="SM01002">
    <property type="entry name" value="AlaDh_PNT_C"/>
    <property type="match status" value="1"/>
</dbReference>
<dbReference type="SMART" id="SM01003">
    <property type="entry name" value="AlaDh_PNT_N"/>
    <property type="match status" value="1"/>
</dbReference>
<dbReference type="SUPFAM" id="SSF52283">
    <property type="entry name" value="Formate/glycerate dehydrogenase catalytic domain-like"/>
    <property type="match status" value="1"/>
</dbReference>
<dbReference type="SUPFAM" id="SSF51735">
    <property type="entry name" value="NAD(P)-binding Rossmann-fold domains"/>
    <property type="match status" value="1"/>
</dbReference>
<dbReference type="PROSITE" id="PS00836">
    <property type="entry name" value="ALADH_PNT_1"/>
    <property type="match status" value="1"/>
</dbReference>
<dbReference type="PROSITE" id="PS00837">
    <property type="entry name" value="ALADH_PNT_2"/>
    <property type="match status" value="1"/>
</dbReference>
<feature type="chain" id="PRO_0000199001" description="Alanine dehydrogenase 2">
    <location>
        <begin position="1"/>
        <end position="372"/>
    </location>
</feature>
<feature type="active site" evidence="2">
    <location>
        <position position="95"/>
    </location>
</feature>
<feature type="binding site" evidence="1">
    <location>
        <begin position="169"/>
        <end position="199"/>
    </location>
    <ligand>
        <name>NAD(+)</name>
        <dbReference type="ChEBI" id="CHEBI:57540"/>
    </ligand>
</feature>
<reference key="1">
    <citation type="journal article" date="2005" name="J. Bacteriol.">
        <title>Insights on evolution of virulence and resistance from the complete genome analysis of an early methicillin-resistant Staphylococcus aureus strain and a biofilm-producing methicillin-resistant Staphylococcus epidermidis strain.</title>
        <authorList>
            <person name="Gill S.R."/>
            <person name="Fouts D.E."/>
            <person name="Archer G.L."/>
            <person name="Mongodin E.F."/>
            <person name="DeBoy R.T."/>
            <person name="Ravel J."/>
            <person name="Paulsen I.T."/>
            <person name="Kolonay J.F."/>
            <person name="Brinkac L.M."/>
            <person name="Beanan M.J."/>
            <person name="Dodson R.J."/>
            <person name="Daugherty S.C."/>
            <person name="Madupu R."/>
            <person name="Angiuoli S.V."/>
            <person name="Durkin A.S."/>
            <person name="Haft D.H."/>
            <person name="Vamathevan J.J."/>
            <person name="Khouri H."/>
            <person name="Utterback T.R."/>
            <person name="Lee C."/>
            <person name="Dimitrov G."/>
            <person name="Jiang L."/>
            <person name="Qin H."/>
            <person name="Weidman J."/>
            <person name="Tran K."/>
            <person name="Kang K.H."/>
            <person name="Hance I.R."/>
            <person name="Nelson K.E."/>
            <person name="Fraser C.M."/>
        </authorList>
    </citation>
    <scope>NUCLEOTIDE SEQUENCE [LARGE SCALE GENOMIC DNA]</scope>
    <source>
        <strain>COL</strain>
    </source>
</reference>
<gene>
    <name type="primary">ald2</name>
    <name type="ordered locus">SACOL1758</name>
</gene>
<keyword id="KW-0520">NAD</keyword>
<keyword id="KW-0560">Oxidoreductase</keyword>
<organism>
    <name type="scientific">Staphylococcus aureus (strain COL)</name>
    <dbReference type="NCBI Taxonomy" id="93062"/>
    <lineage>
        <taxon>Bacteria</taxon>
        <taxon>Bacillati</taxon>
        <taxon>Bacillota</taxon>
        <taxon>Bacilli</taxon>
        <taxon>Bacillales</taxon>
        <taxon>Staphylococcaceae</taxon>
        <taxon>Staphylococcus</taxon>
    </lineage>
</organism>
<sequence>MKIGIPREIKNNENRVGLSPSGVHALVESGHTVLVETNAGSGSFFEDVDYKEAGAEIVAEQAKVWDVDMVIKVKEPLESEYPYFKEGLVLFTYLHLANEEKLTQALIDRKVISIAYETVQLPDRSLPLLSPMSEVAGRMSAQVGAEFLQKLNGGMGILLGGVPGVPKGKVTIIGGGQAGTNAAKIALGLGADVTILDVNPKRLQQLDDLFGGRVHTIMSNPLNIELYVKQSDLVIGAVLIPGAKAPRLVTEDMIKQMKNGSVIIDIAIDQGGIFETTDKITTHDDPTYIKHGVVHYAVANMPGAVPRTSTLALNNATLPYALMLANKGYREAFKSNQPLSLGLNTYKGHVTNKGVAEAFEMEYKSVEEALQL</sequence>
<proteinExistence type="inferred from homology"/>